<keyword id="KW-0687">Ribonucleoprotein</keyword>
<keyword id="KW-0689">Ribosomal protein</keyword>
<reference key="1">
    <citation type="journal article" date="2006" name="J. Bacteriol.">
        <title>The Methanosarcina barkeri genome: comparative analysis with Methanosarcina acetivorans and Methanosarcina mazei reveals extensive rearrangement within methanosarcinal genomes.</title>
        <authorList>
            <person name="Maeder D.L."/>
            <person name="Anderson I."/>
            <person name="Brettin T.S."/>
            <person name="Bruce D.C."/>
            <person name="Gilna P."/>
            <person name="Han C.S."/>
            <person name="Lapidus A."/>
            <person name="Metcalf W.W."/>
            <person name="Saunders E."/>
            <person name="Tapia R."/>
            <person name="Sowers K.R."/>
        </authorList>
    </citation>
    <scope>NUCLEOTIDE SEQUENCE [LARGE SCALE GENOMIC DNA]</scope>
    <source>
        <strain>Fusaro / DSM 804</strain>
    </source>
</reference>
<accession>Q46GB6</accession>
<sequence length="153" mass="17330">MYAIVRLRGQVNVRYTIEDTMKMLRLHKVNHCVLVPENPHFKGMVQKVKDYVAFGKIDANTLAEILENRGRLEGDTRLTEEYIRENTAYDSIQAFAEAVVNGETTLKSVPKLKPVFRLHPPRKGHAGIKRTVQQGGELGDHGDGINALLHKMR</sequence>
<evidence type="ECO:0000255" key="1">
    <source>
        <dbReference type="HAMAP-Rule" id="MF_01371"/>
    </source>
</evidence>
<evidence type="ECO:0000305" key="2"/>
<feature type="chain" id="PRO_0000273906" description="Large ribosomal subunit protein uL30">
    <location>
        <begin position="1"/>
        <end position="153"/>
    </location>
</feature>
<protein>
    <recommendedName>
        <fullName evidence="1">Large ribosomal subunit protein uL30</fullName>
    </recommendedName>
    <alternativeName>
        <fullName evidence="2">50S ribosomal protein L30</fullName>
    </alternativeName>
</protein>
<organism>
    <name type="scientific">Methanosarcina barkeri (strain Fusaro / DSM 804)</name>
    <dbReference type="NCBI Taxonomy" id="269797"/>
    <lineage>
        <taxon>Archaea</taxon>
        <taxon>Methanobacteriati</taxon>
        <taxon>Methanobacteriota</taxon>
        <taxon>Stenosarchaea group</taxon>
        <taxon>Methanomicrobia</taxon>
        <taxon>Methanosarcinales</taxon>
        <taxon>Methanosarcinaceae</taxon>
        <taxon>Methanosarcina</taxon>
    </lineage>
</organism>
<proteinExistence type="inferred from homology"/>
<name>RL30_METBF</name>
<gene>
    <name evidence="1" type="primary">rpl30</name>
    <name type="ordered locus">Mbar_A0089</name>
</gene>
<comment type="subunit">
    <text evidence="1">Part of the 50S ribosomal subunit.</text>
</comment>
<comment type="similarity">
    <text evidence="1">Belongs to the universal ribosomal protein uL30 family.</text>
</comment>
<dbReference type="EMBL" id="CP000099">
    <property type="protein sequence ID" value="AAZ69076.1"/>
    <property type="molecule type" value="Genomic_DNA"/>
</dbReference>
<dbReference type="SMR" id="Q46GB6"/>
<dbReference type="STRING" id="269797.Mbar_A0089"/>
<dbReference type="PaxDb" id="269797-Mbar_A0089"/>
<dbReference type="KEGG" id="mba:Mbar_A0089"/>
<dbReference type="eggNOG" id="arCOG04086">
    <property type="taxonomic scope" value="Archaea"/>
</dbReference>
<dbReference type="HOGENOM" id="CLU_055156_6_0_2"/>
<dbReference type="OrthoDB" id="6379at2157"/>
<dbReference type="GO" id="GO:0022625">
    <property type="term" value="C:cytosolic large ribosomal subunit"/>
    <property type="evidence" value="ECO:0007669"/>
    <property type="project" value="TreeGrafter"/>
</dbReference>
<dbReference type="GO" id="GO:0003723">
    <property type="term" value="F:RNA binding"/>
    <property type="evidence" value="ECO:0007669"/>
    <property type="project" value="TreeGrafter"/>
</dbReference>
<dbReference type="GO" id="GO:0003735">
    <property type="term" value="F:structural constituent of ribosome"/>
    <property type="evidence" value="ECO:0007669"/>
    <property type="project" value="InterPro"/>
</dbReference>
<dbReference type="GO" id="GO:0000463">
    <property type="term" value="P:maturation of LSU-rRNA from tricistronic rRNA transcript (SSU-rRNA, 5.8S rRNA, LSU-rRNA)"/>
    <property type="evidence" value="ECO:0007669"/>
    <property type="project" value="TreeGrafter"/>
</dbReference>
<dbReference type="GO" id="GO:0006412">
    <property type="term" value="P:translation"/>
    <property type="evidence" value="ECO:0007669"/>
    <property type="project" value="UniProtKB-UniRule"/>
</dbReference>
<dbReference type="CDD" id="cd01657">
    <property type="entry name" value="Ribosomal_L7_archeal_euk"/>
    <property type="match status" value="1"/>
</dbReference>
<dbReference type="FunFam" id="1.10.15.30:FF:000002">
    <property type="entry name" value="50S ribosomal protein L30"/>
    <property type="match status" value="1"/>
</dbReference>
<dbReference type="Gene3D" id="1.10.15.30">
    <property type="match status" value="1"/>
</dbReference>
<dbReference type="Gene3D" id="3.30.1390.20">
    <property type="entry name" value="Ribosomal protein L30, ferredoxin-like fold domain"/>
    <property type="match status" value="1"/>
</dbReference>
<dbReference type="HAMAP" id="MF_01371_A">
    <property type="entry name" value="Ribosomal_uL30_A"/>
    <property type="match status" value="1"/>
</dbReference>
<dbReference type="InterPro" id="IPR036919">
    <property type="entry name" value="Ribo_uL30_ferredoxin-like_sf"/>
</dbReference>
<dbReference type="InterPro" id="IPR039699">
    <property type="entry name" value="Ribosomal_uL30"/>
</dbReference>
<dbReference type="InterPro" id="IPR005997">
    <property type="entry name" value="Ribosomal_uL30_arc"/>
</dbReference>
<dbReference type="InterPro" id="IPR018038">
    <property type="entry name" value="Ribosomal_uL30_CS"/>
</dbReference>
<dbReference type="InterPro" id="IPR035808">
    <property type="entry name" value="Ribosomal_uL30_euk_arc"/>
</dbReference>
<dbReference type="InterPro" id="IPR016082">
    <property type="entry name" value="Ribosomal_uL30_ferredoxin-like"/>
</dbReference>
<dbReference type="NCBIfam" id="NF004711">
    <property type="entry name" value="PRK06049.1"/>
    <property type="match status" value="1"/>
</dbReference>
<dbReference type="NCBIfam" id="TIGR01309">
    <property type="entry name" value="uL30_arch"/>
    <property type="match status" value="1"/>
</dbReference>
<dbReference type="PANTHER" id="PTHR11524">
    <property type="entry name" value="60S RIBOSOMAL PROTEIN L7"/>
    <property type="match status" value="1"/>
</dbReference>
<dbReference type="PANTHER" id="PTHR11524:SF16">
    <property type="entry name" value="LARGE RIBOSOMAL SUBUNIT PROTEIN UL30"/>
    <property type="match status" value="1"/>
</dbReference>
<dbReference type="Pfam" id="PF00327">
    <property type="entry name" value="Ribosomal_L30"/>
    <property type="match status" value="1"/>
</dbReference>
<dbReference type="SUPFAM" id="SSF55129">
    <property type="entry name" value="Ribosomal protein L30p/L7e"/>
    <property type="match status" value="1"/>
</dbReference>
<dbReference type="PROSITE" id="PS00634">
    <property type="entry name" value="RIBOSOMAL_L30"/>
    <property type="match status" value="1"/>
</dbReference>